<organismHost>
    <name type="scientific">Homo sapiens</name>
    <name type="common">Human</name>
    <dbReference type="NCBI Taxonomy" id="9606"/>
</organismHost>
<protein>
    <recommendedName>
        <fullName>Major surface glycoprotein G</fullName>
    </recommendedName>
    <alternativeName>
        <fullName>Attachment glycoprotein G</fullName>
    </alternativeName>
    <alternativeName>
        <fullName>Membrane-bound glycoprotein</fullName>
        <shortName>mG</shortName>
    </alternativeName>
    <component>
        <recommendedName>
            <fullName evidence="7">Mature secreted glycoprotein G</fullName>
            <shortName evidence="7">Mature sG</shortName>
        </recommendedName>
    </component>
</protein>
<comment type="function">
    <molecule>Isoform Membrane-bound glycoprotein G</molecule>
    <text evidence="1">Attaches the virion to the host cell membrane by interacting with heparan sulfate, initiating the infection. Interacts with host CX3CR1, the receptor for the CX3C chemokine fractalkine, to modulate the immune response and facilitate infection. Unlike the other paramyxovirus attachment proteins, lacks both neuraminidase and hemagglutinating activities.</text>
</comment>
<comment type="function">
    <molecule>Isoform Secreted glycoprotein G</molecule>
    <text evidence="1">Helps the virus escape antibody-dependent restriction of replication by acting as an antigen decoy and by modulating the activity of leukocytes bearing Fc-gamma receptors.</text>
</comment>
<comment type="subunit">
    <molecule>Isoform Membrane-bound glycoprotein G</molecule>
    <text evidence="1">Homooligomer. Interacts (via N-terminus) with protein M. Part of a complex composed of F1, F2 and G glycoproteins. Interacts with protein SH. Interacts with host heparate sulfate; this interaction probably participates in the viral attachment to the host cell. Interacts with host CX3CR1; this interaction plays an important role in viral entry. Interacts with the host lectins CD209/DC-SIGN and CD209L/L-SIGN on dendritic cells; these interactions stimulate the phosphorylation of MAPK3/ERK1 and MAPK1/ERK2, which inhibits dendritic cell activation and could participate in the limited immunity against RSV reinfection.</text>
</comment>
<comment type="subcellular location">
    <molecule>Isoform Membrane-bound glycoprotein G</molecule>
    <subcellularLocation>
        <location evidence="1">Virion membrane</location>
        <topology evidence="1">Single-pass type II membrane protein</topology>
    </subcellularLocation>
    <subcellularLocation>
        <location evidence="1">Host cell membrane</location>
        <topology evidence="1">Single-pass type II membrane protein</topology>
    </subcellularLocation>
</comment>
<comment type="subcellular location">
    <molecule>Isoform Secreted glycoprotein G</molecule>
    <subcellularLocation>
        <location evidence="5">Secreted</location>
    </subcellularLocation>
    <text evidence="5 7">The protein is shed from infected cells before the appearance of progeny virus (PubMed:3373568). The initiation at the downstream methionine removes a portion of the transmembrane domain. The remaining hydrophobic portion of the sG protein is essential for translocating it into the lumen of the ER during translation and would likely maintain its membrane association until a proteolytic event releases the mature sG protein into the medium (Probable).</text>
</comment>
<comment type="alternative products">
    <event type="alternative initiation"/>
    <isoform>
        <id>P20895-1</id>
        <name>Membrane-bound glycoprotein G</name>
        <sequence type="displayed"/>
    </isoform>
    <isoform>
        <id>P20895-2</id>
        <name>Secreted glycoprotein G</name>
        <sequence type="described" ref="VSP_036524"/>
    </isoform>
</comment>
<comment type="domain">
    <molecule>Isoform Membrane-bound glycoprotein G</molecule>
    <text evidence="1">Contains a linear heparin binding domain essential for virus attachment to the host.</text>
</comment>
<comment type="PTM">
    <molecule>Isoform Secreted glycoprotein G</molecule>
    <text evidence="5">Cleaved to give rise to the mature sG protein which lacks the transmembrane domain.</text>
</comment>
<comment type="similarity">
    <text evidence="6">Belongs to the pneumoviruses glycoprotein G family.</text>
</comment>
<comment type="caution">
    <text evidence="5">A second site of cleavage between residues 74 and 75 has been described but has not been found in other strains.</text>
</comment>
<evidence type="ECO:0000250" key="1">
    <source>
        <dbReference type="UniProtKB" id="P03423"/>
    </source>
</evidence>
<evidence type="ECO:0000255" key="2"/>
<evidence type="ECO:0000256" key="3">
    <source>
        <dbReference type="SAM" id="MobiDB-lite"/>
    </source>
</evidence>
<evidence type="ECO:0000269" key="4">
    <source>
    </source>
</evidence>
<evidence type="ECO:0000269" key="5">
    <source>
    </source>
</evidence>
<evidence type="ECO:0000305" key="6"/>
<evidence type="ECO:0000305" key="7">
    <source>
    </source>
</evidence>
<evidence type="ECO:0007829" key="8">
    <source>
        <dbReference type="PDB" id="1KWD"/>
    </source>
</evidence>
<dbReference type="EMBL" id="M17212">
    <property type="protein sequence ID" value="AAA47411.1"/>
    <property type="molecule type" value="Genomic_RNA"/>
</dbReference>
<dbReference type="EMBL" id="AY911262">
    <property type="protein sequence ID" value="AAX23993.1"/>
    <property type="molecule type" value="Genomic_RNA"/>
</dbReference>
<dbReference type="EMBL" id="KF713491">
    <property type="protein sequence ID" value="AHC94774.1"/>
    <property type="molecule type" value="Viral_cRNA"/>
</dbReference>
<dbReference type="EMBL" id="KF713490">
    <property type="protein sequence ID" value="AHC94762.1"/>
    <property type="molecule type" value="Viral_cRNA"/>
</dbReference>
<dbReference type="EMBL" id="KF713492">
    <property type="protein sequence ID" value="AHC94786.1"/>
    <property type="molecule type" value="Viral_cRNA"/>
</dbReference>
<dbReference type="EMBL" id="KU707921">
    <property type="protein sequence ID" value="AMQ35400.1"/>
    <property type="molecule type" value="Genomic_RNA"/>
</dbReference>
<dbReference type="EMBL" id="KX348546">
    <property type="protein sequence ID" value="API65188.1"/>
    <property type="molecule type" value="Genomic_RNA"/>
</dbReference>
<dbReference type="EMBL" id="MK810782">
    <property type="protein sequence ID" value="QFX69111.1"/>
    <property type="molecule type" value="Genomic_RNA"/>
</dbReference>
<dbReference type="EMBL" id="MK816924">
    <property type="protein sequence ID" value="QFX69123.1"/>
    <property type="molecule type" value="Genomic_RNA"/>
</dbReference>
<dbReference type="EMBL" id="MW039343">
    <property type="protein sequence ID" value="QPB74363.1"/>
    <property type="molecule type" value="Viral_cRNA"/>
</dbReference>
<dbReference type="EMBL" id="MT994242">
    <property type="protein sequence ID" value="QXO84940.1"/>
    <property type="molecule type" value="Genomic_RNA"/>
</dbReference>
<dbReference type="EMBL" id="MT994243">
    <property type="protein sequence ID" value="QXO84951.1"/>
    <property type="molecule type" value="Genomic_RNA"/>
</dbReference>
<dbReference type="PIR" id="A32703">
    <property type="entry name" value="MGNZRL"/>
</dbReference>
<dbReference type="PDB" id="1KWD">
    <property type="method" value="NMR"/>
    <property type="chains" value="A=172-187"/>
</dbReference>
<dbReference type="PDB" id="1KWE">
    <property type="method" value="NMR"/>
    <property type="chains" value="A=172-187"/>
</dbReference>
<dbReference type="PDBsum" id="1KWD"/>
<dbReference type="PDBsum" id="1KWE"/>
<dbReference type="SMR" id="P20895"/>
<dbReference type="BindingDB" id="P20895"/>
<dbReference type="GlyCosmos" id="P20895">
    <property type="glycosylation" value="36 sites, No reported glycans"/>
</dbReference>
<dbReference type="EvolutionaryTrace" id="P20895"/>
<dbReference type="Proteomes" id="UP000103294">
    <property type="component" value="Genome"/>
</dbReference>
<dbReference type="Proteomes" id="UP000119304">
    <property type="component" value="Genome"/>
</dbReference>
<dbReference type="Proteomes" id="UP000130886">
    <property type="component" value="Genome"/>
</dbReference>
<dbReference type="Proteomes" id="UP000158141">
    <property type="component" value="Genome"/>
</dbReference>
<dbReference type="Proteomes" id="UP000163705">
    <property type="component" value="Genome"/>
</dbReference>
<dbReference type="GO" id="GO:0005576">
    <property type="term" value="C:extracellular region"/>
    <property type="evidence" value="ECO:0007669"/>
    <property type="project" value="UniProtKB-SubCell"/>
</dbReference>
<dbReference type="GO" id="GO:0020002">
    <property type="term" value="C:host cell plasma membrane"/>
    <property type="evidence" value="ECO:0007669"/>
    <property type="project" value="UniProtKB-SubCell"/>
</dbReference>
<dbReference type="GO" id="GO:0016020">
    <property type="term" value="C:membrane"/>
    <property type="evidence" value="ECO:0007669"/>
    <property type="project" value="UniProtKB-KW"/>
</dbReference>
<dbReference type="GO" id="GO:0055036">
    <property type="term" value="C:virion membrane"/>
    <property type="evidence" value="ECO:0007669"/>
    <property type="project" value="UniProtKB-SubCell"/>
</dbReference>
<dbReference type="GO" id="GO:0046718">
    <property type="term" value="P:symbiont entry into host cell"/>
    <property type="evidence" value="ECO:0007669"/>
    <property type="project" value="UniProtKB-KW"/>
</dbReference>
<dbReference type="GO" id="GO:0019062">
    <property type="term" value="P:virion attachment to host cell"/>
    <property type="evidence" value="ECO:0007669"/>
    <property type="project" value="UniProtKB-KW"/>
</dbReference>
<dbReference type="InterPro" id="IPR000925">
    <property type="entry name" value="G_prot"/>
</dbReference>
<dbReference type="Pfam" id="PF00802">
    <property type="entry name" value="Glycoprotein_G"/>
    <property type="match status" value="1"/>
</dbReference>
<proteinExistence type="evidence at protein level"/>
<organism>
    <name type="scientific">Human respiratory syncytial virus</name>
    <dbReference type="NCBI Taxonomy" id="11250"/>
    <lineage>
        <taxon>Viruses</taxon>
        <taxon>Riboviria</taxon>
        <taxon>Orthornavirae</taxon>
        <taxon>Negarnaviricota</taxon>
        <taxon>Haploviricotina</taxon>
        <taxon>Monjiviricetes</taxon>
        <taxon>Mononegavirales</taxon>
        <taxon>Pneumoviridae</taxon>
        <taxon>Orthopneumovirus</taxon>
        <taxon>Orthopneumovirus hominis</taxon>
    </lineage>
</organism>
<feature type="chain" id="PRO_0000142856" description="Major surface glycoprotein G">
    <location>
        <begin position="1"/>
        <end position="298"/>
    </location>
</feature>
<feature type="chain" id="PRO_0000451325" description="Mature secreted glycoprotein G">
    <location>
        <begin position="66"/>
        <end position="298"/>
    </location>
</feature>
<feature type="topological domain" description="Cytoplasmic" evidence="2">
    <location>
        <begin position="1"/>
        <end position="37"/>
    </location>
</feature>
<feature type="transmembrane region" description="Helical" evidence="2">
    <location>
        <begin position="38"/>
        <end position="66"/>
    </location>
</feature>
<feature type="topological domain" description="Extracellular" evidence="2">
    <location>
        <begin position="67"/>
        <end position="298"/>
    </location>
</feature>
<feature type="region of interest" description="Disordered" evidence="3">
    <location>
        <begin position="119"/>
        <end position="161"/>
    </location>
</feature>
<feature type="region of interest" description="Binding to host heparan sulfate" evidence="1">
    <location>
        <begin position="187"/>
        <end position="198"/>
    </location>
</feature>
<feature type="region of interest" description="Disordered" evidence="3">
    <location>
        <begin position="190"/>
        <end position="298"/>
    </location>
</feature>
<feature type="compositionally biased region" description="Low complexity" evidence="3">
    <location>
        <begin position="127"/>
        <end position="155"/>
    </location>
</feature>
<feature type="compositionally biased region" description="Basic residues" evidence="3">
    <location>
        <begin position="190"/>
        <end position="207"/>
    </location>
</feature>
<feature type="compositionally biased region" description="Basic and acidic residues" evidence="3">
    <location>
        <begin position="211"/>
        <end position="232"/>
    </location>
</feature>
<feature type="compositionally biased region" description="Low complexity" evidence="3">
    <location>
        <begin position="233"/>
        <end position="259"/>
    </location>
</feature>
<feature type="compositionally biased region" description="Polar residues" evidence="3">
    <location>
        <begin position="260"/>
        <end position="298"/>
    </location>
</feature>
<feature type="site" description="Cleavage" evidence="5">
    <location>
        <begin position="65"/>
        <end position="66"/>
    </location>
</feature>
<feature type="glycosylation site" description="O-linked (GalNAc...) threonine; by host" evidence="1">
    <location>
        <position position="70"/>
    </location>
</feature>
<feature type="glycosylation site" description="O-linked (GalNAc...) threonine; by host" evidence="1">
    <location>
        <position position="72"/>
    </location>
</feature>
<feature type="glycosylation site" description="O-linked (GalNAc...) threonine; by host" evidence="1">
    <location>
        <position position="80"/>
    </location>
</feature>
<feature type="glycosylation site" description="O-linked (GalNAc...) threonine; by host" evidence="1">
    <location>
        <position position="86"/>
    </location>
</feature>
<feature type="glycosylation site" description="O-linked (GalNAc...) threonine; by host" evidence="1">
    <location>
        <position position="87"/>
    </location>
</feature>
<feature type="glycosylation site" description="O-linked (GalNAc...) threonine; by host" evidence="1">
    <location>
        <position position="92"/>
    </location>
</feature>
<feature type="glycosylation site" description="O-linked (GalNAc...) serine; by host" evidence="2">
    <location>
        <position position="100"/>
    </location>
</feature>
<feature type="glycosylation site" description="N-linked (GlcNAc...) asparagine; by host" evidence="2">
    <location>
        <position position="103"/>
    </location>
</feature>
<feature type="glycosylation site" description="O-linked (GalNAc...) serine; by host" evidence="2">
    <location>
        <position position="105"/>
    </location>
</feature>
<feature type="glycosylation site" description="O-linked (GalNAc...) threonine; by host" evidence="2">
    <location>
        <position position="113"/>
    </location>
</feature>
<feature type="glycosylation site" description="O-linked (GalNAc...) serine; by host" evidence="2">
    <location>
        <position position="117"/>
    </location>
</feature>
<feature type="glycosylation site" description="O-linked (GalNAc...) threonine; by host" evidence="2">
    <location>
        <position position="119"/>
    </location>
</feature>
<feature type="glycosylation site" description="N-linked (GlcNAc...) asparagine; by host" evidence="2">
    <location>
        <position position="135"/>
    </location>
</feature>
<feature type="glycosylation site" description="O-linked (GalNAc...) threonine; by host" evidence="2">
    <location>
        <position position="137"/>
    </location>
</feature>
<feature type="glycosylation site" description="O-linked (GalNAc...) threonine; by host" evidence="2">
    <location>
        <position position="138"/>
    </location>
</feature>
<feature type="glycosylation site" description="O-linked (GalNAc...) threonine; by host" evidence="2">
    <location>
        <position position="139"/>
    </location>
</feature>
<feature type="glycosylation site" description="O-linked (GalNAc...) threonine; by host" evidence="2">
    <location>
        <position position="141"/>
    </location>
</feature>
<feature type="glycosylation site" description="O-linked (GalNAc...) serine; by host" evidence="2">
    <location>
        <position position="144"/>
    </location>
</feature>
<feature type="glycosylation site" description="O-linked (GalNAc...) threonine; by host" evidence="2">
    <location>
        <position position="147"/>
    </location>
</feature>
<feature type="glycosylation site" description="O-linked (GalNAc...) threonine; by host" evidence="2">
    <location>
        <position position="199"/>
    </location>
</feature>
<feature type="glycosylation site" description="O-linked (GalNAc...) threonine; by host" evidence="2">
    <location>
        <position position="203"/>
    </location>
</feature>
<feature type="glycosylation site" description="O-linked (GalNAc...) threonine; by host" evidence="2">
    <location>
        <position position="219"/>
    </location>
</feature>
<feature type="glycosylation site" description="O-linked (GalNAc...) threonine; by host" evidence="2">
    <location>
        <position position="231"/>
    </location>
</feature>
<feature type="glycosylation site" description="O-linked (GalNAc...) threonine; by host" evidence="2">
    <location>
        <position position="235"/>
    </location>
</feature>
<feature type="glycosylation site" description="N-linked (GlcNAc...) asparagine; by host" evidence="2">
    <location>
        <position position="237"/>
    </location>
</feature>
<feature type="glycosylation site" description="N-linked (GlcNAc...) asparagine; by host" evidence="2">
    <location>
        <position position="250"/>
    </location>
</feature>
<feature type="glycosylation site" description="N-linked (GlcNAc...) asparagine; by host" evidence="2">
    <location>
        <position position="251"/>
    </location>
</feature>
<feature type="glycosylation site" description="O-linked (GalNAc...) threonine; by host" evidence="2">
    <location>
        <position position="253"/>
    </location>
</feature>
<feature type="glycosylation site" description="O-linked (GalNAc...) serine; by host" evidence="2">
    <location>
        <position position="269"/>
    </location>
</feature>
<feature type="glycosylation site" description="O-linked (GlcNAc...) serine; by host" evidence="2">
    <location>
        <position position="270"/>
    </location>
</feature>
<feature type="glycosylation site" description="O-linked (GalNAc...) serine; by host" evidence="2">
    <location>
        <position position="275"/>
    </location>
</feature>
<feature type="glycosylation site" description="O-linked (GalNAc...) threonine; by host" evidence="2">
    <location>
        <position position="282"/>
    </location>
</feature>
<feature type="glycosylation site" description="O-linked (GalNAc...) serine; by host" evidence="2">
    <location>
        <position position="283"/>
    </location>
</feature>
<feature type="glycosylation site" description="O-linked (GalNAc...) serine; by host" evidence="2">
    <location>
        <position position="287"/>
    </location>
</feature>
<feature type="glycosylation site" description="O-linked (GalNAc...) serine; by host" evidence="2">
    <location>
        <position position="290"/>
    </location>
</feature>
<feature type="glycosylation site" description="N-linked (GlcNAc...) asparagine; by host" evidence="2">
    <location>
        <position position="294"/>
    </location>
</feature>
<feature type="disulfide bond" evidence="1">
    <location>
        <begin position="173"/>
        <end position="186"/>
    </location>
</feature>
<feature type="disulfide bond" evidence="1">
    <location>
        <begin position="176"/>
        <end position="182"/>
    </location>
</feature>
<feature type="splice variant" id="VSP_036524" description="In isoform Secreted glycoprotein G." evidence="1">
    <location>
        <begin position="1"/>
        <end position="47"/>
    </location>
</feature>
<feature type="sequence variant" evidence="4">
    <original>L</original>
    <variation>H</variation>
    <location>
        <position position="215"/>
    </location>
</feature>
<feature type="sequence variant" evidence="4">
    <original>T</original>
    <variation>I</variation>
    <location>
        <position position="244"/>
    </location>
</feature>
<feature type="turn" evidence="8">
    <location>
        <begin position="180"/>
        <end position="182"/>
    </location>
</feature>
<gene>
    <name type="primary">G</name>
</gene>
<sequence length="298" mass="32745">MSKNKDQRTAKTLEKTWDTLNHLLFISSGLYKLNLKSIAQITLSILAMIISTSLIITAIIFIASANHKVTLTTAIIQDATSQIKNTTPTYLTQDPQLGISFSNLSEITSQTTTILASTTPGVKSNLQPTTVKTKNTTTTQTQPSKPTTKQRQNKPPNKPNNDFHFEVFNFVPCSICSNNPTCWAICKRIPNKKPGKKTTTKPTKKPTFKTTKKDLKPQTTKPKEVPTTKPTEEPTINTTKTNITTTLLTNNTTGNPKLTSQMETFHSTSSEGNLSPSQVSTTSEHPSQPSSPPNTTRQ</sequence>
<keyword id="KW-0002">3D-structure</keyword>
<keyword id="KW-0024">Alternative initiation</keyword>
<keyword id="KW-0903">Direct protein sequencing</keyword>
<keyword id="KW-1015">Disulfide bond</keyword>
<keyword id="KW-0325">Glycoprotein</keyword>
<keyword id="KW-1032">Host cell membrane</keyword>
<keyword id="KW-1043">Host membrane</keyword>
<keyword id="KW-0945">Host-virus interaction</keyword>
<keyword id="KW-0472">Membrane</keyword>
<keyword id="KW-0964">Secreted</keyword>
<keyword id="KW-0812">Transmembrane</keyword>
<keyword id="KW-1133">Transmembrane helix</keyword>
<keyword id="KW-1161">Viral attachment to host cell</keyword>
<keyword id="KW-0899">Viral immunoevasion</keyword>
<keyword id="KW-0946">Virion</keyword>
<keyword id="KW-1160">Virus entry into host cell</keyword>
<name>GLYC_HRSV</name>
<reference key="1">
    <citation type="journal article" date="1987" name="Proc. Natl. Acad. Sci. U.S.A.">
        <title>The G glycoprotein of human respiratory syncytial viruses of subgroups A and B: extensive sequence divergence between antigenically related proteins.</title>
        <authorList>
            <person name="Johnson P.R."/>
            <person name="Spriggs M.K."/>
            <person name="Olmsted R.A."/>
            <person name="Collins P.L."/>
        </authorList>
    </citation>
    <scope>NUCLEOTIDE SEQUENCE [GENOMIC RNA]</scope>
    <scope>VARIANTS HIS-215 AND ILE-244</scope>
</reference>
<reference key="2">
    <citation type="journal article" date="2005" name="J. Virol.">
        <title>Respiratory syncytial virus nonstructural proteins NS1 and NS2 mediate inhibition of Stat2 expression and alpha/beta interferon responsiveness.</title>
        <authorList>
            <person name="Lo M.S."/>
            <person name="Brazas R.M."/>
            <person name="Holtzman M.J."/>
        </authorList>
    </citation>
    <scope>NUCLEOTIDE SEQUENCE [LARGE SCALE GENOMIC RNA]</scope>
    <source>
        <strain>ATCC VR-26</strain>
    </source>
</reference>
<reference key="3">
    <citation type="journal article" date="2021" name="Nature">
        <title>A condensate-hardening drug blocks RSV replication in vivo.</title>
        <authorList>
            <person name="Risso-Ballester J."/>
            <person name="Galloux M."/>
            <person name="Cao J."/>
            <person name="Le Goffic R."/>
            <person name="Hontonnou F."/>
            <person name="Jobart-Malfait A."/>
            <person name="Desquesnes A."/>
            <person name="Sake S.M."/>
            <person name="Haid S."/>
            <person name="Du M."/>
            <person name="Zhang X."/>
            <person name="Zhang H."/>
            <person name="Wang Z."/>
            <person name="Rincheval V."/>
            <person name="Zhang Y."/>
            <person name="Pietschmann T."/>
            <person name="Eleouet J.F."/>
            <person name="Rameix-Welti M.A."/>
            <person name="Altmeyer R."/>
        </authorList>
    </citation>
    <scope>NUCLEOTIDE SEQUENCE [GENOMIC RNA]</scope>
</reference>
<reference key="4">
    <citation type="journal article" date="1988" name="J. Virol.">
        <title>Further characterization of the soluble form of the G glycoprotein of respiratory syncytial virus.</title>
        <authorList>
            <person name="Hendricks D.A."/>
            <person name="McIntosh K."/>
            <person name="Patterson J.L."/>
        </authorList>
    </citation>
    <scope>PROTEIN SEQUENCE OF 66-71 AND 75-80</scope>
    <scope>SUBCELLULAR LOCATION (ISOFORM SECRETED GLYCOPROTEIN G)</scope>
    <scope>PROTEOLYTIC CLEAVAGE (ISOFORM SECRETED GLYCOPROTEIN G)</scope>
</reference>
<reference key="5">
    <citation type="journal article" date="1987" name="J. Gen. Virol.">
        <title>Appearance of a soluble form of the G protein of respiratory syncytial virus in fluids of infected cells.</title>
        <authorList>
            <person name="Hendricks D.A."/>
            <person name="Baradaran K."/>
            <person name="McIntosh K."/>
            <person name="Patterson J.L."/>
        </authorList>
    </citation>
    <scope>ALTERNATIVE INITIATION (ISOFORM SECRETED GLYCOPROTEIN G)</scope>
</reference>
<accession>P20895</accession>
<accession>Q4KRW5</accession>